<comment type="function">
    <text evidence="1">One of two assembly initiator proteins, it binds directly to the 5'-end of the 23S rRNA, where it nucleates assembly of the 50S subunit.</text>
</comment>
<comment type="function">
    <text evidence="1">One of the proteins that surrounds the polypeptide exit tunnel on the outside of the subunit.</text>
</comment>
<comment type="subunit">
    <text evidence="1">Part of the 50S ribosomal subunit.</text>
</comment>
<comment type="similarity">
    <text evidence="1">Belongs to the universal ribosomal protein uL24 family.</text>
</comment>
<evidence type="ECO:0000255" key="1">
    <source>
        <dbReference type="HAMAP-Rule" id="MF_01326"/>
    </source>
</evidence>
<evidence type="ECO:0000305" key="2"/>
<proteinExistence type="inferred from homology"/>
<name>RL24_CHLAA</name>
<gene>
    <name evidence="1" type="primary">rplX</name>
    <name type="ordered locus">Caur_2380</name>
</gene>
<accession>A9WH77</accession>
<keyword id="KW-1185">Reference proteome</keyword>
<keyword id="KW-0687">Ribonucleoprotein</keyword>
<keyword id="KW-0689">Ribosomal protein</keyword>
<keyword id="KW-0694">RNA-binding</keyword>
<keyword id="KW-0699">rRNA-binding</keyword>
<protein>
    <recommendedName>
        <fullName evidence="1">Large ribosomal subunit protein uL24</fullName>
    </recommendedName>
    <alternativeName>
        <fullName evidence="2">50S ribosomal protein L24</fullName>
    </alternativeName>
</protein>
<reference key="1">
    <citation type="journal article" date="2011" name="BMC Genomics">
        <title>Complete genome sequence of the filamentous anoxygenic phototrophic bacterium Chloroflexus aurantiacus.</title>
        <authorList>
            <person name="Tang K.H."/>
            <person name="Barry K."/>
            <person name="Chertkov O."/>
            <person name="Dalin E."/>
            <person name="Han C.S."/>
            <person name="Hauser L.J."/>
            <person name="Honchak B.M."/>
            <person name="Karbach L.E."/>
            <person name="Land M.L."/>
            <person name="Lapidus A."/>
            <person name="Larimer F.W."/>
            <person name="Mikhailova N."/>
            <person name="Pitluck S."/>
            <person name="Pierson B.K."/>
            <person name="Blankenship R.E."/>
        </authorList>
    </citation>
    <scope>NUCLEOTIDE SEQUENCE [LARGE SCALE GENOMIC DNA]</scope>
    <source>
        <strain>ATCC 29366 / DSM 635 / J-10-fl</strain>
    </source>
</reference>
<organism>
    <name type="scientific">Chloroflexus aurantiacus (strain ATCC 29366 / DSM 635 / J-10-fl)</name>
    <dbReference type="NCBI Taxonomy" id="324602"/>
    <lineage>
        <taxon>Bacteria</taxon>
        <taxon>Bacillati</taxon>
        <taxon>Chloroflexota</taxon>
        <taxon>Chloroflexia</taxon>
        <taxon>Chloroflexales</taxon>
        <taxon>Chloroflexineae</taxon>
        <taxon>Chloroflexaceae</taxon>
        <taxon>Chloroflexus</taxon>
    </lineage>
</organism>
<feature type="chain" id="PRO_1000086475" description="Large ribosomal subunit protein uL24">
    <location>
        <begin position="1"/>
        <end position="110"/>
    </location>
</feature>
<sequence>MHVKTGDEVLVIAGKDKGRRGKIKRALPAVNRVVVEGINIVKRHQKPRGPGRPGGIIEMEAPLHASNVMLICPSCGRASRTGKRFLEETDHKGRPRKVRYCKACDAVIDK</sequence>
<dbReference type="EMBL" id="CP000909">
    <property type="protein sequence ID" value="ABY35589.1"/>
    <property type="molecule type" value="Genomic_DNA"/>
</dbReference>
<dbReference type="RefSeq" id="WP_012258242.1">
    <property type="nucleotide sequence ID" value="NC_010175.1"/>
</dbReference>
<dbReference type="RefSeq" id="YP_001635978.1">
    <property type="nucleotide sequence ID" value="NC_010175.1"/>
</dbReference>
<dbReference type="SMR" id="A9WH77"/>
<dbReference type="FunCoup" id="A9WH77">
    <property type="interactions" value="438"/>
</dbReference>
<dbReference type="STRING" id="324602.Caur_2380"/>
<dbReference type="EnsemblBacteria" id="ABY35589">
    <property type="protein sequence ID" value="ABY35589"/>
    <property type="gene ID" value="Caur_2380"/>
</dbReference>
<dbReference type="KEGG" id="cau:Caur_2380"/>
<dbReference type="PATRIC" id="fig|324602.8.peg.2694"/>
<dbReference type="eggNOG" id="COG0198">
    <property type="taxonomic scope" value="Bacteria"/>
</dbReference>
<dbReference type="HOGENOM" id="CLU_093315_2_0_0"/>
<dbReference type="InParanoid" id="A9WH77"/>
<dbReference type="Proteomes" id="UP000002008">
    <property type="component" value="Chromosome"/>
</dbReference>
<dbReference type="GO" id="GO:0022625">
    <property type="term" value="C:cytosolic large ribosomal subunit"/>
    <property type="evidence" value="ECO:0000318"/>
    <property type="project" value="GO_Central"/>
</dbReference>
<dbReference type="GO" id="GO:0019843">
    <property type="term" value="F:rRNA binding"/>
    <property type="evidence" value="ECO:0007669"/>
    <property type="project" value="UniProtKB-UniRule"/>
</dbReference>
<dbReference type="GO" id="GO:0003735">
    <property type="term" value="F:structural constituent of ribosome"/>
    <property type="evidence" value="ECO:0007669"/>
    <property type="project" value="InterPro"/>
</dbReference>
<dbReference type="GO" id="GO:0006412">
    <property type="term" value="P:translation"/>
    <property type="evidence" value="ECO:0000318"/>
    <property type="project" value="GO_Central"/>
</dbReference>
<dbReference type="CDD" id="cd06089">
    <property type="entry name" value="KOW_RPL26"/>
    <property type="match status" value="1"/>
</dbReference>
<dbReference type="FunFam" id="2.30.30.30:FF:000051">
    <property type="entry name" value="50S ribosomal protein L24"/>
    <property type="match status" value="1"/>
</dbReference>
<dbReference type="Gene3D" id="2.30.30.30">
    <property type="match status" value="1"/>
</dbReference>
<dbReference type="HAMAP" id="MF_01326_B">
    <property type="entry name" value="Ribosomal_uL24_B"/>
    <property type="match status" value="1"/>
</dbReference>
<dbReference type="InterPro" id="IPR005824">
    <property type="entry name" value="KOW"/>
</dbReference>
<dbReference type="InterPro" id="IPR014722">
    <property type="entry name" value="Rib_uL2_dom2"/>
</dbReference>
<dbReference type="InterPro" id="IPR003256">
    <property type="entry name" value="Ribosomal_uL24"/>
</dbReference>
<dbReference type="InterPro" id="IPR005825">
    <property type="entry name" value="Ribosomal_uL24_CS"/>
</dbReference>
<dbReference type="InterPro" id="IPR041988">
    <property type="entry name" value="Ribosomal_uL24_KOW"/>
</dbReference>
<dbReference type="InterPro" id="IPR008991">
    <property type="entry name" value="Translation_prot_SH3-like_sf"/>
</dbReference>
<dbReference type="NCBIfam" id="TIGR01079">
    <property type="entry name" value="rplX_bact"/>
    <property type="match status" value="1"/>
</dbReference>
<dbReference type="PANTHER" id="PTHR12903">
    <property type="entry name" value="MITOCHONDRIAL RIBOSOMAL PROTEIN L24"/>
    <property type="match status" value="1"/>
</dbReference>
<dbReference type="Pfam" id="PF00467">
    <property type="entry name" value="KOW"/>
    <property type="match status" value="1"/>
</dbReference>
<dbReference type="Pfam" id="PF17136">
    <property type="entry name" value="ribosomal_L24"/>
    <property type="match status" value="1"/>
</dbReference>
<dbReference type="SMART" id="SM00739">
    <property type="entry name" value="KOW"/>
    <property type="match status" value="1"/>
</dbReference>
<dbReference type="SUPFAM" id="SSF50104">
    <property type="entry name" value="Translation proteins SH3-like domain"/>
    <property type="match status" value="1"/>
</dbReference>
<dbReference type="PROSITE" id="PS01108">
    <property type="entry name" value="RIBOSOMAL_L24"/>
    <property type="match status" value="1"/>
</dbReference>